<comment type="function">
    <text evidence="1">The RuvA-RuvB-RuvC complex processes Holliday junction (HJ) DNA during genetic recombination and DNA repair, while the RuvA-RuvB complex plays an important role in the rescue of blocked DNA replication forks via replication fork reversal (RFR). RuvA specifically binds to HJ cruciform DNA, conferring on it an open structure. The RuvB hexamer acts as an ATP-dependent pump, pulling dsDNA into and through the RuvAB complex. RuvB forms 2 homohexamers on either side of HJ DNA bound by 1 or 2 RuvA tetramers; 4 subunits per hexamer contact DNA at a time. Coordinated motions by a converter formed by DNA-disengaged RuvB subunits stimulates ATP hydrolysis and nucleotide exchange. Immobilization of the converter enables RuvB to convert the ATP-contained energy into a lever motion, pulling 2 nucleotides of DNA out of the RuvA tetramer per ATP hydrolyzed, thus driving DNA branch migration. The RuvB motors rotate together with the DNA substrate, which together with the progressing nucleotide cycle form the mechanistic basis for DNA recombination by continuous HJ branch migration. Branch migration allows RuvC to scan DNA until it finds its consensus sequence, where it cleaves and resolves cruciform DNA.</text>
</comment>
<comment type="catalytic activity">
    <reaction evidence="1">
        <text>ATP + H2O = ADP + phosphate + H(+)</text>
        <dbReference type="Rhea" id="RHEA:13065"/>
        <dbReference type="ChEBI" id="CHEBI:15377"/>
        <dbReference type="ChEBI" id="CHEBI:15378"/>
        <dbReference type="ChEBI" id="CHEBI:30616"/>
        <dbReference type="ChEBI" id="CHEBI:43474"/>
        <dbReference type="ChEBI" id="CHEBI:456216"/>
    </reaction>
</comment>
<comment type="subunit">
    <text evidence="1">Homohexamer. Forms an RuvA(8)-RuvB(12)-Holliday junction (HJ) complex. HJ DNA is sandwiched between 2 RuvA tetramers; dsDNA enters through RuvA and exits via RuvB. An RuvB hexamer assembles on each DNA strand where it exits the tetramer. Each RuvB hexamer is contacted by two RuvA subunits (via domain III) on 2 adjacent RuvB subunits; this complex drives branch migration. In the full resolvosome a probable DNA-RuvA(4)-RuvB(12)-RuvC(2) complex forms which resolves the HJ.</text>
</comment>
<comment type="subcellular location">
    <subcellularLocation>
        <location evidence="1">Cytoplasm</location>
    </subcellularLocation>
</comment>
<comment type="domain">
    <text evidence="1">Has 3 domains, the large (RuvB-L) and small ATPase (RuvB-S) domains and the C-terminal head (RuvB-H) domain. The head domain binds DNA, while the ATPase domains jointly bind ATP, ADP or are empty depending on the state of the subunit in the translocation cycle. During a single DNA translocation step the structure of each domain remains the same, but their relative positions change.</text>
</comment>
<comment type="similarity">
    <text evidence="1">Belongs to the RuvB family.</text>
</comment>
<evidence type="ECO:0000255" key="1">
    <source>
        <dbReference type="HAMAP-Rule" id="MF_00016"/>
    </source>
</evidence>
<evidence type="ECO:0000256" key="2">
    <source>
        <dbReference type="SAM" id="MobiDB-lite"/>
    </source>
</evidence>
<feature type="chain" id="PRO_0000165522" description="Holliday junction branch migration complex subunit RuvB">
    <location>
        <begin position="1"/>
        <end position="362"/>
    </location>
</feature>
<feature type="region of interest" description="Disordered" evidence="2">
    <location>
        <begin position="1"/>
        <end position="27"/>
    </location>
</feature>
<feature type="region of interest" description="Large ATPase domain (RuvB-L)" evidence="1">
    <location>
        <begin position="13"/>
        <end position="206"/>
    </location>
</feature>
<feature type="region of interest" description="Small ATPAse domain (RuvB-S)" evidence="1">
    <location>
        <begin position="207"/>
        <end position="277"/>
    </location>
</feature>
<feature type="region of interest" description="Head domain (RuvB-H)" evidence="1">
    <location>
        <begin position="280"/>
        <end position="362"/>
    </location>
</feature>
<feature type="binding site" evidence="1">
    <location>
        <position position="45"/>
    </location>
    <ligand>
        <name>ATP</name>
        <dbReference type="ChEBI" id="CHEBI:30616"/>
    </ligand>
</feature>
<feature type="binding site" evidence="1">
    <location>
        <position position="46"/>
    </location>
    <ligand>
        <name>ATP</name>
        <dbReference type="ChEBI" id="CHEBI:30616"/>
    </ligand>
</feature>
<feature type="binding site" evidence="1">
    <location>
        <position position="87"/>
    </location>
    <ligand>
        <name>ATP</name>
        <dbReference type="ChEBI" id="CHEBI:30616"/>
    </ligand>
</feature>
<feature type="binding site" evidence="1">
    <location>
        <position position="90"/>
    </location>
    <ligand>
        <name>ATP</name>
        <dbReference type="ChEBI" id="CHEBI:30616"/>
    </ligand>
</feature>
<feature type="binding site" evidence="1">
    <location>
        <position position="91"/>
    </location>
    <ligand>
        <name>ATP</name>
        <dbReference type="ChEBI" id="CHEBI:30616"/>
    </ligand>
</feature>
<feature type="binding site" evidence="1">
    <location>
        <position position="91"/>
    </location>
    <ligand>
        <name>Mg(2+)</name>
        <dbReference type="ChEBI" id="CHEBI:18420"/>
    </ligand>
</feature>
<feature type="binding site" evidence="1">
    <location>
        <position position="92"/>
    </location>
    <ligand>
        <name>ATP</name>
        <dbReference type="ChEBI" id="CHEBI:30616"/>
    </ligand>
</feature>
<feature type="binding site" evidence="1">
    <location>
        <begin position="153"/>
        <end position="155"/>
    </location>
    <ligand>
        <name>ATP</name>
        <dbReference type="ChEBI" id="CHEBI:30616"/>
    </ligand>
</feature>
<feature type="binding site" evidence="1">
    <location>
        <position position="196"/>
    </location>
    <ligand>
        <name>ATP</name>
        <dbReference type="ChEBI" id="CHEBI:30616"/>
    </ligand>
</feature>
<feature type="binding site" evidence="1">
    <location>
        <position position="206"/>
    </location>
    <ligand>
        <name>ATP</name>
        <dbReference type="ChEBI" id="CHEBI:30616"/>
    </ligand>
</feature>
<feature type="binding site" evidence="1">
    <location>
        <position position="243"/>
    </location>
    <ligand>
        <name>ATP</name>
        <dbReference type="ChEBI" id="CHEBI:30616"/>
    </ligand>
</feature>
<feature type="binding site" evidence="1">
    <location>
        <position position="335"/>
    </location>
    <ligand>
        <name>DNA</name>
        <dbReference type="ChEBI" id="CHEBI:16991"/>
    </ligand>
</feature>
<feature type="binding site" evidence="1">
    <location>
        <position position="340"/>
    </location>
    <ligand>
        <name>DNA</name>
        <dbReference type="ChEBI" id="CHEBI:16991"/>
    </ligand>
</feature>
<accession>P61530</accession>
<reference key="1">
    <citation type="journal article" date="2003" name="Nucleic Acids Res.">
        <title>The complete genome sequence and analysis of Corynebacterium diphtheriae NCTC13129.</title>
        <authorList>
            <person name="Cerdeno-Tarraga A.-M."/>
            <person name="Efstratiou A."/>
            <person name="Dover L.G."/>
            <person name="Holden M.T.G."/>
            <person name="Pallen M.J."/>
            <person name="Bentley S.D."/>
            <person name="Besra G.S."/>
            <person name="Churcher C.M."/>
            <person name="James K.D."/>
            <person name="De Zoysa A."/>
            <person name="Chillingworth T."/>
            <person name="Cronin A."/>
            <person name="Dowd L."/>
            <person name="Feltwell T."/>
            <person name="Hamlin N."/>
            <person name="Holroyd S."/>
            <person name="Jagels K."/>
            <person name="Moule S."/>
            <person name="Quail M.A."/>
            <person name="Rabbinowitsch E."/>
            <person name="Rutherford K.M."/>
            <person name="Thomson N.R."/>
            <person name="Unwin L."/>
            <person name="Whitehead S."/>
            <person name="Barrell B.G."/>
            <person name="Parkhill J."/>
        </authorList>
    </citation>
    <scope>NUCLEOTIDE SEQUENCE [LARGE SCALE GENOMIC DNA]</scope>
    <source>
        <strain>ATCC 700971 / NCTC 13129 / Biotype gravis</strain>
    </source>
</reference>
<protein>
    <recommendedName>
        <fullName evidence="1">Holliday junction branch migration complex subunit RuvB</fullName>
        <ecNumber evidence="1">3.6.4.-</ecNumber>
    </recommendedName>
</protein>
<organism>
    <name type="scientific">Corynebacterium diphtheriae (strain ATCC 700971 / NCTC 13129 / Biotype gravis)</name>
    <dbReference type="NCBI Taxonomy" id="257309"/>
    <lineage>
        <taxon>Bacteria</taxon>
        <taxon>Bacillati</taxon>
        <taxon>Actinomycetota</taxon>
        <taxon>Actinomycetes</taxon>
        <taxon>Mycobacteriales</taxon>
        <taxon>Corynebacteriaceae</taxon>
        <taxon>Corynebacterium</taxon>
    </lineage>
</organism>
<name>RUVB_CORDI</name>
<sequence length="362" mass="38595">MANIEKTEFHVPAPVSAAGNQKSSLGNADVDARLQSNEGEVETSLRPRSLDEFIGQPKVRDQLNLVLSGAKSRGVAPDHVLLSGPPGLGKTTMAMIIAYELGTSLRMTSGPALERAGDLAAMLSNLMEGDVLFIDEIHRMARPAEEMLYMAMEDFRIDVIVGKGPGATSIPLELAPFTLVGATTRSGMLTGPLRDRFGFTAQMEFYEVEDLTKVVVRAAAVLGVSIDHDAAVEIASRSRGTPRIANRLLRRVRDFAEVNADGHINLAAAQAALVVFDVDEMGLDRLDRAVLEALIKGHGGGPVGINTLALAVGEEPSTVEEVCEPYLVRAGMVTRTGRGRVATATAWRHLGLEPPEGIIGSL</sequence>
<keyword id="KW-0067">ATP-binding</keyword>
<keyword id="KW-0963">Cytoplasm</keyword>
<keyword id="KW-0227">DNA damage</keyword>
<keyword id="KW-0233">DNA recombination</keyword>
<keyword id="KW-0234">DNA repair</keyword>
<keyword id="KW-0238">DNA-binding</keyword>
<keyword id="KW-0378">Hydrolase</keyword>
<keyword id="KW-0547">Nucleotide-binding</keyword>
<keyword id="KW-1185">Reference proteome</keyword>
<dbReference type="EC" id="3.6.4.-" evidence="1"/>
<dbReference type="EMBL" id="BX248358">
    <property type="protein sequence ID" value="CAE49906.1"/>
    <property type="molecule type" value="Genomic_DNA"/>
</dbReference>
<dbReference type="RefSeq" id="WP_010935020.1">
    <property type="nucleotide sequence ID" value="NC_002935.2"/>
</dbReference>
<dbReference type="SMR" id="P61530"/>
<dbReference type="STRING" id="257309.DIP1375"/>
<dbReference type="KEGG" id="cdi:DIP1375"/>
<dbReference type="HOGENOM" id="CLU_055599_1_0_11"/>
<dbReference type="Proteomes" id="UP000002198">
    <property type="component" value="Chromosome"/>
</dbReference>
<dbReference type="GO" id="GO:0005737">
    <property type="term" value="C:cytoplasm"/>
    <property type="evidence" value="ECO:0007669"/>
    <property type="project" value="UniProtKB-SubCell"/>
</dbReference>
<dbReference type="GO" id="GO:0048476">
    <property type="term" value="C:Holliday junction resolvase complex"/>
    <property type="evidence" value="ECO:0007669"/>
    <property type="project" value="UniProtKB-UniRule"/>
</dbReference>
<dbReference type="GO" id="GO:0005524">
    <property type="term" value="F:ATP binding"/>
    <property type="evidence" value="ECO:0007669"/>
    <property type="project" value="UniProtKB-UniRule"/>
</dbReference>
<dbReference type="GO" id="GO:0016887">
    <property type="term" value="F:ATP hydrolysis activity"/>
    <property type="evidence" value="ECO:0007669"/>
    <property type="project" value="InterPro"/>
</dbReference>
<dbReference type="GO" id="GO:0000400">
    <property type="term" value="F:four-way junction DNA binding"/>
    <property type="evidence" value="ECO:0007669"/>
    <property type="project" value="UniProtKB-UniRule"/>
</dbReference>
<dbReference type="GO" id="GO:0009378">
    <property type="term" value="F:four-way junction helicase activity"/>
    <property type="evidence" value="ECO:0007669"/>
    <property type="project" value="InterPro"/>
</dbReference>
<dbReference type="GO" id="GO:0006310">
    <property type="term" value="P:DNA recombination"/>
    <property type="evidence" value="ECO:0007669"/>
    <property type="project" value="UniProtKB-UniRule"/>
</dbReference>
<dbReference type="GO" id="GO:0006281">
    <property type="term" value="P:DNA repair"/>
    <property type="evidence" value="ECO:0007669"/>
    <property type="project" value="UniProtKB-UniRule"/>
</dbReference>
<dbReference type="CDD" id="cd00009">
    <property type="entry name" value="AAA"/>
    <property type="match status" value="1"/>
</dbReference>
<dbReference type="FunFam" id="3.40.50.300:FF:000073">
    <property type="entry name" value="Holliday junction ATP-dependent DNA helicase RuvB"/>
    <property type="match status" value="1"/>
</dbReference>
<dbReference type="Gene3D" id="1.10.8.60">
    <property type="match status" value="1"/>
</dbReference>
<dbReference type="Gene3D" id="3.40.50.300">
    <property type="entry name" value="P-loop containing nucleotide triphosphate hydrolases"/>
    <property type="match status" value="1"/>
</dbReference>
<dbReference type="Gene3D" id="1.10.10.10">
    <property type="entry name" value="Winged helix-like DNA-binding domain superfamily/Winged helix DNA-binding domain"/>
    <property type="match status" value="1"/>
</dbReference>
<dbReference type="HAMAP" id="MF_00016">
    <property type="entry name" value="DNA_HJ_migration_RuvB"/>
    <property type="match status" value="1"/>
</dbReference>
<dbReference type="InterPro" id="IPR003593">
    <property type="entry name" value="AAA+_ATPase"/>
</dbReference>
<dbReference type="InterPro" id="IPR041445">
    <property type="entry name" value="AAA_lid_4"/>
</dbReference>
<dbReference type="InterPro" id="IPR004605">
    <property type="entry name" value="DNA_helicase_Holl-junc_RuvB"/>
</dbReference>
<dbReference type="InterPro" id="IPR027417">
    <property type="entry name" value="P-loop_NTPase"/>
</dbReference>
<dbReference type="InterPro" id="IPR008824">
    <property type="entry name" value="RuvB-like_N"/>
</dbReference>
<dbReference type="InterPro" id="IPR008823">
    <property type="entry name" value="RuvB_C"/>
</dbReference>
<dbReference type="InterPro" id="IPR036388">
    <property type="entry name" value="WH-like_DNA-bd_sf"/>
</dbReference>
<dbReference type="InterPro" id="IPR036390">
    <property type="entry name" value="WH_DNA-bd_sf"/>
</dbReference>
<dbReference type="NCBIfam" id="NF000868">
    <property type="entry name" value="PRK00080.1"/>
    <property type="match status" value="1"/>
</dbReference>
<dbReference type="NCBIfam" id="TIGR00635">
    <property type="entry name" value="ruvB"/>
    <property type="match status" value="1"/>
</dbReference>
<dbReference type="PANTHER" id="PTHR42848">
    <property type="match status" value="1"/>
</dbReference>
<dbReference type="PANTHER" id="PTHR42848:SF1">
    <property type="entry name" value="HOLLIDAY JUNCTION BRANCH MIGRATION COMPLEX SUBUNIT RUVB"/>
    <property type="match status" value="1"/>
</dbReference>
<dbReference type="Pfam" id="PF17864">
    <property type="entry name" value="AAA_lid_4"/>
    <property type="match status" value="1"/>
</dbReference>
<dbReference type="Pfam" id="PF05491">
    <property type="entry name" value="RuvB_C"/>
    <property type="match status" value="1"/>
</dbReference>
<dbReference type="Pfam" id="PF05496">
    <property type="entry name" value="RuvB_N"/>
    <property type="match status" value="1"/>
</dbReference>
<dbReference type="SMART" id="SM00382">
    <property type="entry name" value="AAA"/>
    <property type="match status" value="1"/>
</dbReference>
<dbReference type="SUPFAM" id="SSF52540">
    <property type="entry name" value="P-loop containing nucleoside triphosphate hydrolases"/>
    <property type="match status" value="1"/>
</dbReference>
<dbReference type="SUPFAM" id="SSF46785">
    <property type="entry name" value="Winged helix' DNA-binding domain"/>
    <property type="match status" value="1"/>
</dbReference>
<gene>
    <name evidence="1" type="primary">ruvB</name>
    <name type="ordered locus">DIP1375</name>
</gene>
<proteinExistence type="inferred from homology"/>